<organism>
    <name type="scientific">Methylorubrum extorquens (strain ATCC 14718 / DSM 1338 / JCM 2805 / NCIMB 9133 / AM1)</name>
    <name type="common">Methylobacterium extorquens</name>
    <dbReference type="NCBI Taxonomy" id="272630"/>
    <lineage>
        <taxon>Bacteria</taxon>
        <taxon>Pseudomonadati</taxon>
        <taxon>Pseudomonadota</taxon>
        <taxon>Alphaproteobacteria</taxon>
        <taxon>Hyphomicrobiales</taxon>
        <taxon>Methylobacteriaceae</taxon>
        <taxon>Methylorubrum</taxon>
    </lineage>
</organism>
<protein>
    <recommendedName>
        <fullName evidence="4">Serine--glyoxylate aminotransferase</fullName>
        <shortName evidence="3">SGAT</shortName>
        <ecNumber evidence="2">2.6.1.45</ecNumber>
    </recommendedName>
</protein>
<gene>
    <name evidence="3" type="primary">sgaA</name>
    <name type="ordered locus">MexAM1_META1p1726</name>
</gene>
<dbReference type="EC" id="2.6.1.45" evidence="2"/>
<dbReference type="EMBL" id="L27235">
    <property type="status" value="NOT_ANNOTATED_CDS"/>
    <property type="molecule type" value="Genomic_DNA"/>
</dbReference>
<dbReference type="EMBL" id="CP001510">
    <property type="protein sequence ID" value="ACS39570.1"/>
    <property type="molecule type" value="Genomic_DNA"/>
</dbReference>
<dbReference type="RefSeq" id="WP_003597639.1">
    <property type="nucleotide sequence ID" value="NC_012808.1"/>
</dbReference>
<dbReference type="SMR" id="P55819"/>
<dbReference type="STRING" id="272630.MexAM1_META1p1726"/>
<dbReference type="KEGG" id="mea:Mex_1p1726"/>
<dbReference type="eggNOG" id="COG0075">
    <property type="taxonomic scope" value="Bacteria"/>
</dbReference>
<dbReference type="HOGENOM" id="CLU_027686_1_0_5"/>
<dbReference type="OrthoDB" id="389074at2"/>
<dbReference type="UniPathway" id="UPA00927"/>
<dbReference type="Proteomes" id="UP000009081">
    <property type="component" value="Chromosome"/>
</dbReference>
<dbReference type="GO" id="GO:0008453">
    <property type="term" value="F:alanine-glyoxylate transaminase activity"/>
    <property type="evidence" value="ECO:0007669"/>
    <property type="project" value="TreeGrafter"/>
</dbReference>
<dbReference type="GO" id="GO:0050281">
    <property type="term" value="F:L-serine-glyoxylate transaminase activity"/>
    <property type="evidence" value="ECO:0007669"/>
    <property type="project" value="UniProtKB-EC"/>
</dbReference>
<dbReference type="GO" id="GO:0004760">
    <property type="term" value="F:L-serine-pyruvate transaminase activity"/>
    <property type="evidence" value="ECO:0007669"/>
    <property type="project" value="TreeGrafter"/>
</dbReference>
<dbReference type="GO" id="GO:0019265">
    <property type="term" value="P:glycine biosynthetic process, by transamination of glyoxylate"/>
    <property type="evidence" value="ECO:0007669"/>
    <property type="project" value="TreeGrafter"/>
</dbReference>
<dbReference type="CDD" id="cd06451">
    <property type="entry name" value="AGAT_like"/>
    <property type="match status" value="1"/>
</dbReference>
<dbReference type="FunFam" id="3.40.640.10:FF:000054">
    <property type="entry name" value="Serine--glyoxylate aminotransferase"/>
    <property type="match status" value="1"/>
</dbReference>
<dbReference type="FunFam" id="3.90.1150.10:FF:000031">
    <property type="entry name" value="Serine--glyoxylate aminotransferase"/>
    <property type="match status" value="1"/>
</dbReference>
<dbReference type="Gene3D" id="3.90.1150.10">
    <property type="entry name" value="Aspartate Aminotransferase, domain 1"/>
    <property type="match status" value="1"/>
</dbReference>
<dbReference type="Gene3D" id="3.40.640.10">
    <property type="entry name" value="Type I PLP-dependent aspartate aminotransferase-like (Major domain)"/>
    <property type="match status" value="1"/>
</dbReference>
<dbReference type="InterPro" id="IPR000192">
    <property type="entry name" value="Aminotrans_V_dom"/>
</dbReference>
<dbReference type="InterPro" id="IPR020578">
    <property type="entry name" value="Aminotrans_V_PyrdxlP_BS"/>
</dbReference>
<dbReference type="InterPro" id="IPR015424">
    <property type="entry name" value="PyrdxlP-dep_Trfase"/>
</dbReference>
<dbReference type="InterPro" id="IPR015421">
    <property type="entry name" value="PyrdxlP-dep_Trfase_major"/>
</dbReference>
<dbReference type="InterPro" id="IPR015422">
    <property type="entry name" value="PyrdxlP-dep_Trfase_small"/>
</dbReference>
<dbReference type="InterPro" id="IPR024169">
    <property type="entry name" value="SP_NH2Trfase/AEP_transaminase"/>
</dbReference>
<dbReference type="PANTHER" id="PTHR21152:SF24">
    <property type="entry name" value="ALANINE--GLYOXYLATE AMINOTRANSFERASE 1"/>
    <property type="match status" value="1"/>
</dbReference>
<dbReference type="PANTHER" id="PTHR21152">
    <property type="entry name" value="AMINOTRANSFERASE CLASS V"/>
    <property type="match status" value="1"/>
</dbReference>
<dbReference type="Pfam" id="PF00266">
    <property type="entry name" value="Aminotran_5"/>
    <property type="match status" value="1"/>
</dbReference>
<dbReference type="PIRSF" id="PIRSF000524">
    <property type="entry name" value="SPT"/>
    <property type="match status" value="1"/>
</dbReference>
<dbReference type="SUPFAM" id="SSF53383">
    <property type="entry name" value="PLP-dependent transferases"/>
    <property type="match status" value="1"/>
</dbReference>
<dbReference type="PROSITE" id="PS00595">
    <property type="entry name" value="AA_TRANSFER_CLASS_5"/>
    <property type="match status" value="1"/>
</dbReference>
<proteinExistence type="evidence at protein level"/>
<reference key="1">
    <citation type="journal article" date="1994" name="J. Bacteriol.">
        <title>Genetics of the serine cycle in Methylobacterium extorquens AM1: identification of sgaA and mtdA and sequences of sgaA, hprA, and mtdA.</title>
        <authorList>
            <person name="Chistoserdova L.V."/>
            <person name="Lidstrom M.E."/>
        </authorList>
    </citation>
    <scope>NUCLEOTIDE SEQUENCE [GENOMIC DNA]</scope>
    <scope>CATALYTIC ACTIVITY</scope>
    <scope>DISRUPTION PHENOTYPE</scope>
    <source>
        <strain>ATCC 14718 / DSM 1338 / JCM 2805 / NCIMB 9133 / AM1</strain>
    </source>
</reference>
<reference key="2">
    <citation type="journal article" date="2009" name="PLoS ONE">
        <title>Methylobacterium genome sequences: a reference blueprint to investigate microbial metabolism of C1 compounds from natural and industrial sources.</title>
        <authorList>
            <person name="Vuilleumier S."/>
            <person name="Chistoserdova L."/>
            <person name="Lee M.-C."/>
            <person name="Bringel F."/>
            <person name="Lajus A."/>
            <person name="Zhou Y."/>
            <person name="Gourion B."/>
            <person name="Barbe V."/>
            <person name="Chang J."/>
            <person name="Cruveiller S."/>
            <person name="Dossat C."/>
            <person name="Gillett W."/>
            <person name="Gruffaz C."/>
            <person name="Haugen E."/>
            <person name="Hourcade E."/>
            <person name="Levy R."/>
            <person name="Mangenot S."/>
            <person name="Muller E."/>
            <person name="Nadalig T."/>
            <person name="Pagni M."/>
            <person name="Penny C."/>
            <person name="Peyraud R."/>
            <person name="Robinson D.G."/>
            <person name="Roche D."/>
            <person name="Rouy Z."/>
            <person name="Saenampechek C."/>
            <person name="Salvignol G."/>
            <person name="Vallenet D."/>
            <person name="Wu Z."/>
            <person name="Marx C.J."/>
            <person name="Vorholt J.A."/>
            <person name="Olson M.V."/>
            <person name="Kaul R."/>
            <person name="Weissenbach J."/>
            <person name="Medigue C."/>
            <person name="Lidstrom M.E."/>
        </authorList>
    </citation>
    <scope>NUCLEOTIDE SEQUENCE [LARGE SCALE GENOMIC DNA]</scope>
    <source>
        <strain>ATCC 14718 / DSM 1338 / JCM 2805 / NCIMB 9133 / AM1</strain>
    </source>
</reference>
<feature type="chain" id="PRO_0000150233" description="Serine--glyoxylate aminotransferase">
    <location>
        <begin position="1"/>
        <end position="402"/>
    </location>
</feature>
<feature type="modified residue" description="N6-(pyridoxal phosphate)lysine" evidence="1">
    <location>
        <position position="201"/>
    </location>
</feature>
<feature type="sequence conflict" description="In Ref. 1; L27235." evidence="4" ref="1">
    <original>MAATRR</original>
    <variation>M</variation>
    <location>
        <begin position="1"/>
        <end position="6"/>
    </location>
</feature>
<feature type="sequence conflict" description="In Ref. 1; L27235." evidence="4" ref="1">
    <location>
        <begin position="176"/>
        <end position="193"/>
    </location>
</feature>
<keyword id="KW-0032">Aminotransferase</keyword>
<keyword id="KW-0663">Pyridoxal phosphate</keyword>
<keyword id="KW-1185">Reference proteome</keyword>
<keyword id="KW-0808">Transferase</keyword>
<sequence>MAATRRPGRNHLFVPGPTNIPDRVMRAMMVQSEDHRSVDFPSLTKPLFEDTKKVFGSTEGTIFLFPASGTGIWESALSNTLARGDKVLAARFGQFSHLWIDMAQRLGLDVVVQEEEWGTGAKPEKIEEALRADKNHEIKAVMVVHNETATGVTSNIGAVRKAIDAAGHPALLFVDGVSSIGSLPFKADEWKVDCAIAGSQKGLMLPAGLGVICVSQKALKAAEGQSGRNDRLARVYFDWEDQKKQNPTGYFPYTPPLPLLYGLREALACLFEEGLENVYHRHAVLGEATRQAVAAWGLKTCAKSPEWNSDTVTAILAPEGVDAAKIIKHAYVRYNLALGAGLSQVAGKVFRIGHVGDLNELSLLGAIAGAEMSLIDNGVKVTPGSGVAAASSYLRENPLAKA</sequence>
<name>SGAA_METEA</name>
<evidence type="ECO:0000250" key="1">
    <source>
        <dbReference type="UniProtKB" id="Q988B8"/>
    </source>
</evidence>
<evidence type="ECO:0000269" key="2">
    <source>
    </source>
</evidence>
<evidence type="ECO:0000303" key="3">
    <source>
    </source>
</evidence>
<evidence type="ECO:0000305" key="4"/>
<accession>P55819</accession>
<accession>C5B106</accession>
<comment type="catalytic activity">
    <reaction evidence="2">
        <text>glyoxylate + L-serine = 3-hydroxypyruvate + glycine</text>
        <dbReference type="Rhea" id="RHEA:19125"/>
        <dbReference type="ChEBI" id="CHEBI:17180"/>
        <dbReference type="ChEBI" id="CHEBI:33384"/>
        <dbReference type="ChEBI" id="CHEBI:36655"/>
        <dbReference type="ChEBI" id="CHEBI:57305"/>
        <dbReference type="EC" id="2.6.1.45"/>
    </reaction>
</comment>
<comment type="cofactor">
    <cofactor evidence="1">
        <name>pyridoxal 5'-phosphate</name>
        <dbReference type="ChEBI" id="CHEBI:597326"/>
    </cofactor>
</comment>
<comment type="pathway">
    <text evidence="4">One-carbon metabolism; formaldehyde assimilation via serine pathway.</text>
</comment>
<comment type="disruption phenotype">
    <text evidence="2">Mutants cannot grow on Cl compounds (methanol, methylamine, and formate) but grow normally on C2 compounds (ethanol and ethylamine).</text>
</comment>
<comment type="similarity">
    <text evidence="4">Belongs to the class-V pyridoxal-phosphate-dependent aminotransferase family.</text>
</comment>